<evidence type="ECO:0000255" key="1"/>
<evidence type="ECO:0000305" key="2"/>
<dbReference type="EMBL" id="AE000657">
    <property type="protein sequence ID" value="AAC06601.1"/>
    <property type="molecule type" value="Genomic_DNA"/>
</dbReference>
<dbReference type="PIR" id="G70326">
    <property type="entry name" value="G70326"/>
</dbReference>
<dbReference type="RefSeq" id="NP_213203.1">
    <property type="nucleotide sequence ID" value="NC_000918.1"/>
</dbReference>
<dbReference type="RefSeq" id="WP_010880141.1">
    <property type="nucleotide sequence ID" value="NC_000918.1"/>
</dbReference>
<dbReference type="STRING" id="224324.aq_293"/>
<dbReference type="EnsemblBacteria" id="AAC06601">
    <property type="protein sequence ID" value="AAC06601"/>
    <property type="gene ID" value="aq_293"/>
</dbReference>
<dbReference type="KEGG" id="aae:aq_293"/>
<dbReference type="eggNOG" id="COG3431">
    <property type="taxonomic scope" value="Bacteria"/>
</dbReference>
<dbReference type="HOGENOM" id="CLU_1923208_0_0_0"/>
<dbReference type="InParanoid" id="O66643"/>
<dbReference type="Proteomes" id="UP000000798">
    <property type="component" value="Chromosome"/>
</dbReference>
<dbReference type="GO" id="GO:0005886">
    <property type="term" value="C:plasma membrane"/>
    <property type="evidence" value="ECO:0007669"/>
    <property type="project" value="UniProtKB-SubCell"/>
</dbReference>
<dbReference type="InterPro" id="IPR020948">
    <property type="entry name" value="P_starv_induced_PsiE-like"/>
</dbReference>
<dbReference type="Pfam" id="PF06146">
    <property type="entry name" value="PsiE"/>
    <property type="match status" value="1"/>
</dbReference>
<proteinExistence type="predicted"/>
<gene>
    <name type="ordered locus">aq_293</name>
</gene>
<organism>
    <name type="scientific">Aquifex aeolicus (strain VF5)</name>
    <dbReference type="NCBI Taxonomy" id="224324"/>
    <lineage>
        <taxon>Bacteria</taxon>
        <taxon>Pseudomonadati</taxon>
        <taxon>Aquificota</taxon>
        <taxon>Aquificia</taxon>
        <taxon>Aquificales</taxon>
        <taxon>Aquificaceae</taxon>
        <taxon>Aquifex</taxon>
    </lineage>
</organism>
<protein>
    <recommendedName>
        <fullName>Uncharacterized protein aq_293</fullName>
    </recommendedName>
</protein>
<name>Y293_AQUAE</name>
<comment type="subcellular location">
    <subcellularLocation>
        <location evidence="2">Cell membrane</location>
        <topology evidence="2">Multi-pass membrane protein</topology>
    </subcellularLocation>
</comment>
<sequence>MNKLTLLLKFLIQAFMWFAIASEFVSLLYEIFHSLKENYFLGLETHKILVKVLNVIIIYELFTTLLIALEERRIKLILIIDTAMIFFIRELLIVLFTYKKLELSEGIASALILGTLGILRFLYLKYKIDVE</sequence>
<accession>O66643</accession>
<reference key="1">
    <citation type="journal article" date="1998" name="Nature">
        <title>The complete genome of the hyperthermophilic bacterium Aquifex aeolicus.</title>
        <authorList>
            <person name="Deckert G."/>
            <person name="Warren P.V."/>
            <person name="Gaasterland T."/>
            <person name="Young W.G."/>
            <person name="Lenox A.L."/>
            <person name="Graham D.E."/>
            <person name="Overbeek R."/>
            <person name="Snead M.A."/>
            <person name="Keller M."/>
            <person name="Aujay M."/>
            <person name="Huber R."/>
            <person name="Feldman R.A."/>
            <person name="Short J.M."/>
            <person name="Olsen G.J."/>
            <person name="Swanson R.V."/>
        </authorList>
    </citation>
    <scope>NUCLEOTIDE SEQUENCE [LARGE SCALE GENOMIC DNA]</scope>
    <source>
        <strain>VF5</strain>
    </source>
</reference>
<feature type="chain" id="PRO_0000186851" description="Uncharacterized protein aq_293">
    <location>
        <begin position="1"/>
        <end position="131"/>
    </location>
</feature>
<feature type="transmembrane region" description="Helical" evidence="1">
    <location>
        <begin position="7"/>
        <end position="29"/>
    </location>
</feature>
<feature type="transmembrane region" description="Helical" evidence="1">
    <location>
        <begin position="49"/>
        <end position="69"/>
    </location>
</feature>
<feature type="transmembrane region" description="Helical" evidence="1">
    <location>
        <begin position="76"/>
        <end position="98"/>
    </location>
</feature>
<feature type="transmembrane region" description="Helical" evidence="1">
    <location>
        <begin position="102"/>
        <end position="124"/>
    </location>
</feature>
<keyword id="KW-1003">Cell membrane</keyword>
<keyword id="KW-0472">Membrane</keyword>
<keyword id="KW-1185">Reference proteome</keyword>
<keyword id="KW-0812">Transmembrane</keyword>
<keyword id="KW-1133">Transmembrane helix</keyword>